<name>GSA_ACIBY</name>
<keyword id="KW-0963">Cytoplasm</keyword>
<keyword id="KW-0413">Isomerase</keyword>
<keyword id="KW-0627">Porphyrin biosynthesis</keyword>
<keyword id="KW-0663">Pyridoxal phosphate</keyword>
<feature type="chain" id="PRO_1000121850" description="Glutamate-1-semialdehyde 2,1-aminomutase">
    <location>
        <begin position="1"/>
        <end position="432"/>
    </location>
</feature>
<feature type="modified residue" description="N6-(pyridoxal phosphate)lysine" evidence="1">
    <location>
        <position position="270"/>
    </location>
</feature>
<gene>
    <name evidence="1" type="primary">hemL</name>
    <name type="ordered locus">ABAYE1011</name>
</gene>
<comment type="catalytic activity">
    <reaction evidence="1">
        <text>(S)-4-amino-5-oxopentanoate = 5-aminolevulinate</text>
        <dbReference type="Rhea" id="RHEA:14265"/>
        <dbReference type="ChEBI" id="CHEBI:57501"/>
        <dbReference type="ChEBI" id="CHEBI:356416"/>
        <dbReference type="EC" id="5.4.3.8"/>
    </reaction>
</comment>
<comment type="cofactor">
    <cofactor evidence="1">
        <name>pyridoxal 5'-phosphate</name>
        <dbReference type="ChEBI" id="CHEBI:597326"/>
    </cofactor>
</comment>
<comment type="pathway">
    <text evidence="1">Porphyrin-containing compound metabolism; protoporphyrin-IX biosynthesis; 5-aminolevulinate from L-glutamyl-tRNA(Glu): step 2/2.</text>
</comment>
<comment type="subunit">
    <text evidence="1">Homodimer.</text>
</comment>
<comment type="subcellular location">
    <subcellularLocation>
        <location evidence="1">Cytoplasm</location>
    </subcellularLocation>
</comment>
<comment type="similarity">
    <text evidence="1">Belongs to the class-III pyridoxal-phosphate-dependent aminotransferase family. HemL subfamily.</text>
</comment>
<reference key="1">
    <citation type="journal article" date="2008" name="PLoS ONE">
        <title>Comparative analysis of Acinetobacters: three genomes for three lifestyles.</title>
        <authorList>
            <person name="Vallenet D."/>
            <person name="Nordmann P."/>
            <person name="Barbe V."/>
            <person name="Poirel L."/>
            <person name="Mangenot S."/>
            <person name="Bataille E."/>
            <person name="Dossat C."/>
            <person name="Gas S."/>
            <person name="Kreimeyer A."/>
            <person name="Lenoble P."/>
            <person name="Oztas S."/>
            <person name="Poulain J."/>
            <person name="Segurens B."/>
            <person name="Robert C."/>
            <person name="Abergel C."/>
            <person name="Claverie J.-M."/>
            <person name="Raoult D."/>
            <person name="Medigue C."/>
            <person name="Weissenbach J."/>
            <person name="Cruveiller S."/>
        </authorList>
    </citation>
    <scope>NUCLEOTIDE SEQUENCE [LARGE SCALE GENOMIC DNA]</scope>
    <source>
        <strain>AYE</strain>
    </source>
</reference>
<protein>
    <recommendedName>
        <fullName evidence="1">Glutamate-1-semialdehyde 2,1-aminomutase</fullName>
        <shortName evidence="1">GSA</shortName>
        <ecNumber evidence="1">5.4.3.8</ecNumber>
    </recommendedName>
    <alternativeName>
        <fullName evidence="1">Glutamate-1-semialdehyde aminotransferase</fullName>
        <shortName evidence="1">GSA-AT</shortName>
    </alternativeName>
</protein>
<accession>B0VCN6</accession>
<sequence length="432" mass="46405">MSLSPKQEQLFKQASKHIPGGVNSPVRAFNGVGGTPVFIEKAKGAYLWDVDGKRYVDYVGSWGPMILGHAHPDIIKAVQTAAEDGLSFGAPTVHETTLADIICEIMPSIELVRMTNSGTEATMTAIRLARGYTGRDKIVKFEGCYHGHSDSLLVKAGSGLLTKGEGEPTSKGVPADFAKHTLTLPYNDIAALKECFAKFGHEIAGVIIEPVAGNMNMVKPIDGFLQAIRDVCDEYKSVFIIDEVMTGFRVALGGAQSVYNVKPDLTTLGKIIGAGLPVGAFGGKREIMECIAPLGGVYQAGTLSGNPLAMRAGIEMFKHLRQPDFYSKLSAQLEKLLAGLQAAADEAGIPFKTQQAGAMFGLYFTDQEDITSFDSMLACDIEAFKKFFHGMLKRGVNLAPSAFEAGFISSAHSDEDIEFTIQAAKETFAEMK</sequence>
<dbReference type="EC" id="5.4.3.8" evidence="1"/>
<dbReference type="EMBL" id="CU459141">
    <property type="protein sequence ID" value="CAM85946.1"/>
    <property type="molecule type" value="Genomic_DNA"/>
</dbReference>
<dbReference type="RefSeq" id="WP_000059223.1">
    <property type="nucleotide sequence ID" value="NZ_JBDGFB010000021.1"/>
</dbReference>
<dbReference type="SMR" id="B0VCN6"/>
<dbReference type="EnsemblBacteria" id="CAM85946">
    <property type="protein sequence ID" value="CAM85946"/>
    <property type="gene ID" value="ABAYE1011"/>
</dbReference>
<dbReference type="KEGG" id="aby:ABAYE1011"/>
<dbReference type="HOGENOM" id="CLU_016922_1_5_6"/>
<dbReference type="UniPathway" id="UPA00251">
    <property type="reaction ID" value="UER00317"/>
</dbReference>
<dbReference type="GO" id="GO:0005737">
    <property type="term" value="C:cytoplasm"/>
    <property type="evidence" value="ECO:0007669"/>
    <property type="project" value="UniProtKB-SubCell"/>
</dbReference>
<dbReference type="GO" id="GO:0042286">
    <property type="term" value="F:glutamate-1-semialdehyde 2,1-aminomutase activity"/>
    <property type="evidence" value="ECO:0007669"/>
    <property type="project" value="UniProtKB-UniRule"/>
</dbReference>
<dbReference type="GO" id="GO:0030170">
    <property type="term" value="F:pyridoxal phosphate binding"/>
    <property type="evidence" value="ECO:0007669"/>
    <property type="project" value="InterPro"/>
</dbReference>
<dbReference type="GO" id="GO:0008483">
    <property type="term" value="F:transaminase activity"/>
    <property type="evidence" value="ECO:0007669"/>
    <property type="project" value="InterPro"/>
</dbReference>
<dbReference type="GO" id="GO:0006782">
    <property type="term" value="P:protoporphyrinogen IX biosynthetic process"/>
    <property type="evidence" value="ECO:0007669"/>
    <property type="project" value="UniProtKB-UniRule"/>
</dbReference>
<dbReference type="CDD" id="cd00610">
    <property type="entry name" value="OAT_like"/>
    <property type="match status" value="1"/>
</dbReference>
<dbReference type="FunFam" id="3.40.640.10:FF:000021">
    <property type="entry name" value="Glutamate-1-semialdehyde 2,1-aminomutase"/>
    <property type="match status" value="1"/>
</dbReference>
<dbReference type="Gene3D" id="3.90.1150.10">
    <property type="entry name" value="Aspartate Aminotransferase, domain 1"/>
    <property type="match status" value="1"/>
</dbReference>
<dbReference type="Gene3D" id="3.40.640.10">
    <property type="entry name" value="Type I PLP-dependent aspartate aminotransferase-like (Major domain)"/>
    <property type="match status" value="1"/>
</dbReference>
<dbReference type="HAMAP" id="MF_00375">
    <property type="entry name" value="HemL_aminotrans_3"/>
    <property type="match status" value="1"/>
</dbReference>
<dbReference type="InterPro" id="IPR004639">
    <property type="entry name" value="4pyrrol_synth_GluAld_NH2Trfase"/>
</dbReference>
<dbReference type="InterPro" id="IPR005814">
    <property type="entry name" value="Aminotrans_3"/>
</dbReference>
<dbReference type="InterPro" id="IPR049704">
    <property type="entry name" value="Aminotrans_3_PPA_site"/>
</dbReference>
<dbReference type="InterPro" id="IPR015424">
    <property type="entry name" value="PyrdxlP-dep_Trfase"/>
</dbReference>
<dbReference type="InterPro" id="IPR015421">
    <property type="entry name" value="PyrdxlP-dep_Trfase_major"/>
</dbReference>
<dbReference type="InterPro" id="IPR015422">
    <property type="entry name" value="PyrdxlP-dep_Trfase_small"/>
</dbReference>
<dbReference type="NCBIfam" id="TIGR00713">
    <property type="entry name" value="hemL"/>
    <property type="match status" value="1"/>
</dbReference>
<dbReference type="NCBIfam" id="NF000818">
    <property type="entry name" value="PRK00062.1"/>
    <property type="match status" value="1"/>
</dbReference>
<dbReference type="PANTHER" id="PTHR43713">
    <property type="entry name" value="GLUTAMATE-1-SEMIALDEHYDE 2,1-AMINOMUTASE"/>
    <property type="match status" value="1"/>
</dbReference>
<dbReference type="PANTHER" id="PTHR43713:SF3">
    <property type="entry name" value="GLUTAMATE-1-SEMIALDEHYDE 2,1-AMINOMUTASE 1, CHLOROPLASTIC-RELATED"/>
    <property type="match status" value="1"/>
</dbReference>
<dbReference type="Pfam" id="PF00202">
    <property type="entry name" value="Aminotran_3"/>
    <property type="match status" value="1"/>
</dbReference>
<dbReference type="SUPFAM" id="SSF53383">
    <property type="entry name" value="PLP-dependent transferases"/>
    <property type="match status" value="1"/>
</dbReference>
<dbReference type="PROSITE" id="PS00600">
    <property type="entry name" value="AA_TRANSFER_CLASS_3"/>
    <property type="match status" value="1"/>
</dbReference>
<evidence type="ECO:0000255" key="1">
    <source>
        <dbReference type="HAMAP-Rule" id="MF_00375"/>
    </source>
</evidence>
<organism>
    <name type="scientific">Acinetobacter baumannii (strain AYE)</name>
    <dbReference type="NCBI Taxonomy" id="509173"/>
    <lineage>
        <taxon>Bacteria</taxon>
        <taxon>Pseudomonadati</taxon>
        <taxon>Pseudomonadota</taxon>
        <taxon>Gammaproteobacteria</taxon>
        <taxon>Moraxellales</taxon>
        <taxon>Moraxellaceae</taxon>
        <taxon>Acinetobacter</taxon>
        <taxon>Acinetobacter calcoaceticus/baumannii complex</taxon>
    </lineage>
</organism>
<proteinExistence type="inferred from homology"/>